<name>RSLBA_RAT</name>
<gene>
    <name evidence="8" type="primary">Rasl11a</name>
</gene>
<reference evidence="6" key="1">
    <citation type="journal article" date="2004" name="Nature">
        <title>Genome sequence of the Brown Norway rat yields insights into mammalian evolution.</title>
        <authorList>
            <person name="Gibbs R.A."/>
            <person name="Weinstock G.M."/>
            <person name="Metzker M.L."/>
            <person name="Muzny D.M."/>
            <person name="Sodergren E.J."/>
            <person name="Scherer S."/>
            <person name="Scott G."/>
            <person name="Steffen D."/>
            <person name="Worley K.C."/>
            <person name="Burch P.E."/>
            <person name="Okwuonu G."/>
            <person name="Hines S."/>
            <person name="Lewis L."/>
            <person name="Deramo C."/>
            <person name="Delgado O."/>
            <person name="Dugan-Rocha S."/>
            <person name="Miner G."/>
            <person name="Morgan M."/>
            <person name="Hawes A."/>
            <person name="Gill R."/>
            <person name="Holt R.A."/>
            <person name="Adams M.D."/>
            <person name="Amanatides P.G."/>
            <person name="Baden-Tillson H."/>
            <person name="Barnstead M."/>
            <person name="Chin S."/>
            <person name="Evans C.A."/>
            <person name="Ferriera S."/>
            <person name="Fosler C."/>
            <person name="Glodek A."/>
            <person name="Gu Z."/>
            <person name="Jennings D."/>
            <person name="Kraft C.L."/>
            <person name="Nguyen T."/>
            <person name="Pfannkoch C.M."/>
            <person name="Sitter C."/>
            <person name="Sutton G.G."/>
            <person name="Venter J.C."/>
            <person name="Woodage T."/>
            <person name="Smith D."/>
            <person name="Lee H.-M."/>
            <person name="Gustafson E."/>
            <person name="Cahill P."/>
            <person name="Kana A."/>
            <person name="Doucette-Stamm L."/>
            <person name="Weinstock K."/>
            <person name="Fechtel K."/>
            <person name="Weiss R.B."/>
            <person name="Dunn D.M."/>
            <person name="Green E.D."/>
            <person name="Blakesley R.W."/>
            <person name="Bouffard G.G."/>
            <person name="De Jong P.J."/>
            <person name="Osoegawa K."/>
            <person name="Zhu B."/>
            <person name="Marra M."/>
            <person name="Schein J."/>
            <person name="Bosdet I."/>
            <person name="Fjell C."/>
            <person name="Jones S."/>
            <person name="Krzywinski M."/>
            <person name="Mathewson C."/>
            <person name="Siddiqui A."/>
            <person name="Wye N."/>
            <person name="McPherson J."/>
            <person name="Zhao S."/>
            <person name="Fraser C.M."/>
            <person name="Shetty J."/>
            <person name="Shatsman S."/>
            <person name="Geer K."/>
            <person name="Chen Y."/>
            <person name="Abramzon S."/>
            <person name="Nierman W.C."/>
            <person name="Havlak P.H."/>
            <person name="Chen R."/>
            <person name="Durbin K.J."/>
            <person name="Egan A."/>
            <person name="Ren Y."/>
            <person name="Song X.-Z."/>
            <person name="Li B."/>
            <person name="Liu Y."/>
            <person name="Qin X."/>
            <person name="Cawley S."/>
            <person name="Cooney A.J."/>
            <person name="D'Souza L.M."/>
            <person name="Martin K."/>
            <person name="Wu J.Q."/>
            <person name="Gonzalez-Garay M.L."/>
            <person name="Jackson A.R."/>
            <person name="Kalafus K.J."/>
            <person name="McLeod M.P."/>
            <person name="Milosavljevic A."/>
            <person name="Virk D."/>
            <person name="Volkov A."/>
            <person name="Wheeler D.A."/>
            <person name="Zhang Z."/>
            <person name="Bailey J.A."/>
            <person name="Eichler E.E."/>
            <person name="Tuzun E."/>
            <person name="Birney E."/>
            <person name="Mongin E."/>
            <person name="Ureta-Vidal A."/>
            <person name="Woodwark C."/>
            <person name="Zdobnov E."/>
            <person name="Bork P."/>
            <person name="Suyama M."/>
            <person name="Torrents D."/>
            <person name="Alexandersson M."/>
            <person name="Trask B.J."/>
            <person name="Young J.M."/>
            <person name="Huang H."/>
            <person name="Wang H."/>
            <person name="Xing H."/>
            <person name="Daniels S."/>
            <person name="Gietzen D."/>
            <person name="Schmidt J."/>
            <person name="Stevens K."/>
            <person name="Vitt U."/>
            <person name="Wingrove J."/>
            <person name="Camara F."/>
            <person name="Mar Alba M."/>
            <person name="Abril J.F."/>
            <person name="Guigo R."/>
            <person name="Smit A."/>
            <person name="Dubchak I."/>
            <person name="Rubin E.M."/>
            <person name="Couronne O."/>
            <person name="Poliakov A."/>
            <person name="Huebner N."/>
            <person name="Ganten D."/>
            <person name="Goesele C."/>
            <person name="Hummel O."/>
            <person name="Kreitler T."/>
            <person name="Lee Y.-A."/>
            <person name="Monti J."/>
            <person name="Schulz H."/>
            <person name="Zimdahl H."/>
            <person name="Himmelbauer H."/>
            <person name="Lehrach H."/>
            <person name="Jacob H.J."/>
            <person name="Bromberg S."/>
            <person name="Gullings-Handley J."/>
            <person name="Jensen-Seaman M.I."/>
            <person name="Kwitek A.E."/>
            <person name="Lazar J."/>
            <person name="Pasko D."/>
            <person name="Tonellato P.J."/>
            <person name="Twigger S."/>
            <person name="Ponting C.P."/>
            <person name="Duarte J.M."/>
            <person name="Rice S."/>
            <person name="Goodstadt L."/>
            <person name="Beatson S.A."/>
            <person name="Emes R.D."/>
            <person name="Winter E.E."/>
            <person name="Webber C."/>
            <person name="Brandt P."/>
            <person name="Nyakatura G."/>
            <person name="Adetobi M."/>
            <person name="Chiaromonte F."/>
            <person name="Elnitski L."/>
            <person name="Eswara P."/>
            <person name="Hardison R.C."/>
            <person name="Hou M."/>
            <person name="Kolbe D."/>
            <person name="Makova K."/>
            <person name="Miller W."/>
            <person name="Nekrutenko A."/>
            <person name="Riemer C."/>
            <person name="Schwartz S."/>
            <person name="Taylor J."/>
            <person name="Yang S."/>
            <person name="Zhang Y."/>
            <person name="Lindpaintner K."/>
            <person name="Andrews T.D."/>
            <person name="Caccamo M."/>
            <person name="Clamp M."/>
            <person name="Clarke L."/>
            <person name="Curwen V."/>
            <person name="Durbin R.M."/>
            <person name="Eyras E."/>
            <person name="Searle S.M."/>
            <person name="Cooper G.M."/>
            <person name="Batzoglou S."/>
            <person name="Brudno M."/>
            <person name="Sidow A."/>
            <person name="Stone E.A."/>
            <person name="Payseur B.A."/>
            <person name="Bourque G."/>
            <person name="Lopez-Otin C."/>
            <person name="Puente X.S."/>
            <person name="Chakrabarti K."/>
            <person name="Chatterji S."/>
            <person name="Dewey C."/>
            <person name="Pachter L."/>
            <person name="Bray N."/>
            <person name="Yap V.B."/>
            <person name="Caspi A."/>
            <person name="Tesler G."/>
            <person name="Pevzner P.A."/>
            <person name="Haussler D."/>
            <person name="Roskin K.M."/>
            <person name="Baertsch R."/>
            <person name="Clawson H."/>
            <person name="Furey T.S."/>
            <person name="Hinrichs A.S."/>
            <person name="Karolchik D."/>
            <person name="Kent W.J."/>
            <person name="Rosenbloom K.R."/>
            <person name="Trumbower H."/>
            <person name="Weirauch M."/>
            <person name="Cooper D.N."/>
            <person name="Stenson P.D."/>
            <person name="Ma B."/>
            <person name="Brent M."/>
            <person name="Arumugam M."/>
            <person name="Shteynberg D."/>
            <person name="Copley R.R."/>
            <person name="Taylor M.S."/>
            <person name="Riethman H."/>
            <person name="Mudunuri U."/>
            <person name="Peterson J."/>
            <person name="Guyer M."/>
            <person name="Felsenfeld A."/>
            <person name="Old S."/>
            <person name="Mockrin S."/>
            <person name="Collins F.S."/>
        </authorList>
    </citation>
    <scope>NUCLEOTIDE SEQUENCE [LARGE SCALE GENOMIC DNA]</scope>
    <source>
        <strain evidence="5">Brown Norway</strain>
    </source>
</reference>
<reference evidence="6 7" key="2">
    <citation type="journal article" date="2004" name="Biochem. Biophys. Res. Commun.">
        <title>Rasl11a, member of a novel small monomeric GTPase gene family, is differentially expressed in prostate tumors.</title>
        <authorList>
            <person name="Louro R."/>
            <person name="Nakaya H.I."/>
            <person name="Paquola A.C.M."/>
            <person name="Martins E.A.L."/>
            <person name="da Silva A.M."/>
            <person name="Verjovski-Almeida S."/>
            <person name="Reis E.M."/>
        </authorList>
    </citation>
    <scope>IDENTIFICATION</scope>
</reference>
<sequence length="242" mass="26975">MRPLTMSGHFLLAPIPESSSDYLLPKDIKLAVLGASCVGKSAMIVRFLTKRFIGDYEPNTGKLYSRLVYVEGDQLSLQIQDTPGGIQAQDSLGQMVDSLSKCVQWAEGFLLVYSITDYESYQSIRPLYQHIRKVHPDGKAPVVIVGNKGDLLHARQVQTHEGLQLANELGSLFLEISTSENYEDVCDVFQHLCKEVSKLHSLSGERRRASIIPRPRSPNMQDLKRRFRQALSSKAKAASTLG</sequence>
<proteinExistence type="evidence at transcript level"/>
<comment type="function">
    <text evidence="1">Regulator of rDNA transcription. Acts in cooperation UBF/UBTF and positively regulates RNA polymerase I transcription (By similarity).</text>
</comment>
<comment type="catalytic activity">
    <reaction evidence="2">
        <text>GTP + H2O = GDP + phosphate + H(+)</text>
        <dbReference type="Rhea" id="RHEA:19669"/>
        <dbReference type="ChEBI" id="CHEBI:15377"/>
        <dbReference type="ChEBI" id="CHEBI:15378"/>
        <dbReference type="ChEBI" id="CHEBI:37565"/>
        <dbReference type="ChEBI" id="CHEBI:43474"/>
        <dbReference type="ChEBI" id="CHEBI:58189"/>
        <dbReference type="EC" id="3.6.5.2"/>
    </reaction>
</comment>
<comment type="subunit">
    <text evidence="1">Interacts with UBF/UBTF.</text>
</comment>
<comment type="subcellular location">
    <subcellularLocation>
        <location evidence="1">Nucleus</location>
        <location evidence="1">Nucleolus</location>
    </subcellularLocation>
    <text evidence="1">Associates with rDNA transcription unit throughout the cell cycle.</text>
</comment>
<comment type="similarity">
    <text evidence="4">Belongs to the small GTPase superfamily. Ras family.</text>
</comment>
<comment type="caution">
    <text evidence="6">Although highly related to the Ras family, lacks the conserved prenylation motif at the C-terminus, which serves to target Ras proteins to membrane compartments.</text>
</comment>
<comment type="sequence caution" evidence="6">
    <conflict type="miscellaneous discrepancy">
        <sequence resource="EMBL-CDS" id="DAA02256"/>
    </conflict>
    <text>The sequence is derived from an EMBL/GenBank/DDBJ third party annotation (TPA) record where an error has been made in the annotation of the N-terminal region.</text>
</comment>
<keyword id="KW-0342">GTP-binding</keyword>
<keyword id="KW-0378">Hydrolase</keyword>
<keyword id="KW-0547">Nucleotide-binding</keyword>
<keyword id="KW-0539">Nucleus</keyword>
<keyword id="KW-1185">Reference proteome</keyword>
<keyword id="KW-0804">Transcription</keyword>
<keyword id="KW-0805">Transcription regulation</keyword>
<evidence type="ECO:0000250" key="1"/>
<evidence type="ECO:0000250" key="2">
    <source>
        <dbReference type="UniProtKB" id="P01116"/>
    </source>
</evidence>
<evidence type="ECO:0000250" key="3">
    <source>
        <dbReference type="UniProtKB" id="Q96A58"/>
    </source>
</evidence>
<evidence type="ECO:0000255" key="4"/>
<evidence type="ECO:0000269" key="5">
    <source>
    </source>
</evidence>
<evidence type="ECO:0000305" key="6"/>
<evidence type="ECO:0000312" key="7">
    <source>
        <dbReference type="EMBL" id="DAA02256.1"/>
    </source>
</evidence>
<evidence type="ECO:0000312" key="8">
    <source>
        <dbReference type="RGD" id="1303231"/>
    </source>
</evidence>
<protein>
    <recommendedName>
        <fullName>Ras-like protein family member 11A</fullName>
        <ecNumber evidence="2">3.6.5.2</ecNumber>
    </recommendedName>
</protein>
<dbReference type="EC" id="3.6.5.2" evidence="2"/>
<dbReference type="EMBL" id="AC128501">
    <property type="status" value="NOT_ANNOTATED_CDS"/>
    <property type="molecule type" value="Genomic_DNA"/>
</dbReference>
<dbReference type="EMBL" id="BK001714">
    <property type="protein sequence ID" value="DAA02256.1"/>
    <property type="status" value="ALT_SEQ"/>
    <property type="molecule type" value="mRNA"/>
</dbReference>
<dbReference type="RefSeq" id="NP_001002829.1">
    <property type="nucleotide sequence ID" value="NM_001002829.1"/>
</dbReference>
<dbReference type="RefSeq" id="NP_001388042.1">
    <property type="nucleotide sequence ID" value="NM_001401113.2"/>
</dbReference>
<dbReference type="SMR" id="Q6IMA3"/>
<dbReference type="FunCoup" id="Q6IMA3">
    <property type="interactions" value="243"/>
</dbReference>
<dbReference type="STRING" id="10116.ENSRNOP00000001264"/>
<dbReference type="PhosphoSitePlus" id="Q6IMA3"/>
<dbReference type="PaxDb" id="10116-ENSRNOP00000001264"/>
<dbReference type="Ensembl" id="ENSRNOT00000087449.2">
    <property type="protein sequence ID" value="ENSRNOP00000073169.1"/>
    <property type="gene ID" value="ENSRNOG00000000956.6"/>
</dbReference>
<dbReference type="GeneID" id="304268"/>
<dbReference type="AGR" id="RGD:1303231"/>
<dbReference type="RGD" id="1303231">
    <property type="gene designation" value="Rasl11a"/>
</dbReference>
<dbReference type="eggNOG" id="KOG0395">
    <property type="taxonomic scope" value="Eukaryota"/>
</dbReference>
<dbReference type="GeneTree" id="ENSGT00940000161208"/>
<dbReference type="HOGENOM" id="CLU_041217_9_7_1"/>
<dbReference type="InParanoid" id="Q6IMA3"/>
<dbReference type="OMA" id="TMSGHCL"/>
<dbReference type="PhylomeDB" id="Q6IMA3"/>
<dbReference type="TreeFam" id="TF318030"/>
<dbReference type="PRO" id="PR:Q6IMA3"/>
<dbReference type="Proteomes" id="UP000002494">
    <property type="component" value="Chromosome 12"/>
</dbReference>
<dbReference type="Bgee" id="ENSRNOG00000000956">
    <property type="expression patterns" value="Expressed in Ammon's horn and 20 other cell types or tissues"/>
</dbReference>
<dbReference type="ExpressionAtlas" id="Q6IMA3">
    <property type="expression patterns" value="baseline and differential"/>
</dbReference>
<dbReference type="GO" id="GO:0005730">
    <property type="term" value="C:nucleolus"/>
    <property type="evidence" value="ECO:0000250"/>
    <property type="project" value="UniProtKB"/>
</dbReference>
<dbReference type="GO" id="GO:0003925">
    <property type="term" value="F:G protein activity"/>
    <property type="evidence" value="ECO:0007669"/>
    <property type="project" value="UniProtKB-EC"/>
</dbReference>
<dbReference type="GO" id="GO:0005525">
    <property type="term" value="F:GTP binding"/>
    <property type="evidence" value="ECO:0007669"/>
    <property type="project" value="UniProtKB-KW"/>
</dbReference>
<dbReference type="GO" id="GO:0045943">
    <property type="term" value="P:positive regulation of transcription by RNA polymerase I"/>
    <property type="evidence" value="ECO:0000250"/>
    <property type="project" value="UniProtKB"/>
</dbReference>
<dbReference type="CDD" id="cd04146">
    <property type="entry name" value="RERG_RasL11_like"/>
    <property type="match status" value="1"/>
</dbReference>
<dbReference type="FunFam" id="3.40.50.300:FF:000718">
    <property type="entry name" value="Ras-like protein family member 11A"/>
    <property type="match status" value="1"/>
</dbReference>
<dbReference type="Gene3D" id="3.40.50.300">
    <property type="entry name" value="P-loop containing nucleotide triphosphate hydrolases"/>
    <property type="match status" value="1"/>
</dbReference>
<dbReference type="InterPro" id="IPR027417">
    <property type="entry name" value="P-loop_NTPase"/>
</dbReference>
<dbReference type="InterPro" id="IPR051065">
    <property type="entry name" value="Ras-related_GTPase"/>
</dbReference>
<dbReference type="InterPro" id="IPR005225">
    <property type="entry name" value="Small_GTP-bd"/>
</dbReference>
<dbReference type="InterPro" id="IPR001806">
    <property type="entry name" value="Small_GTPase"/>
</dbReference>
<dbReference type="NCBIfam" id="TIGR00231">
    <property type="entry name" value="small_GTP"/>
    <property type="match status" value="1"/>
</dbReference>
<dbReference type="PANTHER" id="PTHR45704">
    <property type="entry name" value="RAS-LIKE FAMILY MEMBER 11"/>
    <property type="match status" value="1"/>
</dbReference>
<dbReference type="Pfam" id="PF00071">
    <property type="entry name" value="Ras"/>
    <property type="match status" value="1"/>
</dbReference>
<dbReference type="PRINTS" id="PR00449">
    <property type="entry name" value="RASTRNSFRMNG"/>
</dbReference>
<dbReference type="SMART" id="SM00175">
    <property type="entry name" value="RAB"/>
    <property type="match status" value="1"/>
</dbReference>
<dbReference type="SMART" id="SM00173">
    <property type="entry name" value="RAS"/>
    <property type="match status" value="1"/>
</dbReference>
<dbReference type="SMART" id="SM00174">
    <property type="entry name" value="RHO"/>
    <property type="match status" value="1"/>
</dbReference>
<dbReference type="SUPFAM" id="SSF52540">
    <property type="entry name" value="P-loop containing nucleoside triphosphate hydrolases"/>
    <property type="match status" value="1"/>
</dbReference>
<dbReference type="PROSITE" id="PS51421">
    <property type="entry name" value="RAS"/>
    <property type="match status" value="1"/>
</dbReference>
<accession>Q6IMA3</accession>
<feature type="chain" id="PRO_0000308362" description="Ras-like protein family member 11A">
    <location>
        <begin position="1"/>
        <end position="242"/>
    </location>
</feature>
<feature type="region of interest" description="Small GTPase-like">
    <location>
        <begin position="17"/>
        <end position="241"/>
    </location>
</feature>
<feature type="binding site" evidence="3">
    <location>
        <begin position="34"/>
        <end position="41"/>
    </location>
    <ligand>
        <name>GTP</name>
        <dbReference type="ChEBI" id="CHEBI:37565"/>
    </ligand>
</feature>
<feature type="binding site" evidence="3">
    <location>
        <begin position="81"/>
        <end position="85"/>
    </location>
    <ligand>
        <name>GTP</name>
        <dbReference type="ChEBI" id="CHEBI:37565"/>
    </ligand>
</feature>
<feature type="binding site" evidence="3">
    <location>
        <begin position="147"/>
        <end position="150"/>
    </location>
    <ligand>
        <name>GTP</name>
        <dbReference type="ChEBI" id="CHEBI:37565"/>
    </ligand>
</feature>
<organism>
    <name type="scientific">Rattus norvegicus</name>
    <name type="common">Rat</name>
    <dbReference type="NCBI Taxonomy" id="10116"/>
    <lineage>
        <taxon>Eukaryota</taxon>
        <taxon>Metazoa</taxon>
        <taxon>Chordata</taxon>
        <taxon>Craniata</taxon>
        <taxon>Vertebrata</taxon>
        <taxon>Euteleostomi</taxon>
        <taxon>Mammalia</taxon>
        <taxon>Eutheria</taxon>
        <taxon>Euarchontoglires</taxon>
        <taxon>Glires</taxon>
        <taxon>Rodentia</taxon>
        <taxon>Myomorpha</taxon>
        <taxon>Muroidea</taxon>
        <taxon>Muridae</taxon>
        <taxon>Murinae</taxon>
        <taxon>Rattus</taxon>
    </lineage>
</organism>